<protein>
    <recommendedName>
        <fullName evidence="1">Small ribosomal subunit protein bS16</fullName>
    </recommendedName>
    <alternativeName>
        <fullName evidence="3">30S ribosomal protein S16</fullName>
    </alternativeName>
</protein>
<keyword id="KW-0687">Ribonucleoprotein</keyword>
<keyword id="KW-0689">Ribosomal protein</keyword>
<proteinExistence type="inferred from homology"/>
<comment type="similarity">
    <text evidence="1">Belongs to the bacterial ribosomal protein bS16 family.</text>
</comment>
<gene>
    <name evidence="1" type="primary">rpsP</name>
    <name type="ordered locus">Mjls_1945</name>
</gene>
<name>RS16_MYCSJ</name>
<organism>
    <name type="scientific">Mycobacterium sp. (strain JLS)</name>
    <dbReference type="NCBI Taxonomy" id="164757"/>
    <lineage>
        <taxon>Bacteria</taxon>
        <taxon>Bacillati</taxon>
        <taxon>Actinomycetota</taxon>
        <taxon>Actinomycetes</taxon>
        <taxon>Mycobacteriales</taxon>
        <taxon>Mycobacteriaceae</taxon>
        <taxon>Mycobacterium</taxon>
    </lineage>
</organism>
<sequence length="168" mass="17994">MAVKIKLTRLGKIRNPQYRIVVADARTRRDGRSIEVIGRYHPKEEPSLIELNSERAQYWLGVGAQPTEPVLQLLKITGDWQKFKGLPGAEGTLKVKEPKPSKLDLFNAALAEAEGGPSNEATQPKKKKAPAKKAASDIEATADPAGNADKSEPAAEGEDATVAGATEG</sequence>
<feature type="chain" id="PRO_1000049294" description="Small ribosomal subunit protein bS16">
    <location>
        <begin position="1"/>
        <end position="168"/>
    </location>
</feature>
<feature type="region of interest" description="Disordered" evidence="2">
    <location>
        <begin position="110"/>
        <end position="168"/>
    </location>
</feature>
<reference key="1">
    <citation type="submission" date="2007-02" db="EMBL/GenBank/DDBJ databases">
        <title>Complete sequence of Mycobacterium sp. JLS.</title>
        <authorList>
            <consortium name="US DOE Joint Genome Institute"/>
            <person name="Copeland A."/>
            <person name="Lucas S."/>
            <person name="Lapidus A."/>
            <person name="Barry K."/>
            <person name="Detter J.C."/>
            <person name="Glavina del Rio T."/>
            <person name="Hammon N."/>
            <person name="Israni S."/>
            <person name="Dalin E."/>
            <person name="Tice H."/>
            <person name="Pitluck S."/>
            <person name="Chain P."/>
            <person name="Malfatti S."/>
            <person name="Shin M."/>
            <person name="Vergez L."/>
            <person name="Schmutz J."/>
            <person name="Larimer F."/>
            <person name="Land M."/>
            <person name="Hauser L."/>
            <person name="Kyrpides N."/>
            <person name="Mikhailova N."/>
            <person name="Miller C.D."/>
            <person name="Anderson A.J."/>
            <person name="Sims R.C."/>
            <person name="Richardson P."/>
        </authorList>
    </citation>
    <scope>NUCLEOTIDE SEQUENCE [LARGE SCALE GENOMIC DNA]</scope>
    <source>
        <strain>JLS</strain>
    </source>
</reference>
<evidence type="ECO:0000255" key="1">
    <source>
        <dbReference type="HAMAP-Rule" id="MF_00385"/>
    </source>
</evidence>
<evidence type="ECO:0000256" key="2">
    <source>
        <dbReference type="SAM" id="MobiDB-lite"/>
    </source>
</evidence>
<evidence type="ECO:0000305" key="3"/>
<dbReference type="EMBL" id="CP000580">
    <property type="protein sequence ID" value="ABN97733.1"/>
    <property type="molecule type" value="Genomic_DNA"/>
</dbReference>
<dbReference type="SMR" id="A3PXV6"/>
<dbReference type="KEGG" id="mjl:Mjls_1945"/>
<dbReference type="HOGENOM" id="CLU_100590_1_1_11"/>
<dbReference type="BioCyc" id="MSP164757:G1G8C-1965-MONOMER"/>
<dbReference type="GO" id="GO:0005737">
    <property type="term" value="C:cytoplasm"/>
    <property type="evidence" value="ECO:0007669"/>
    <property type="project" value="UniProtKB-ARBA"/>
</dbReference>
<dbReference type="GO" id="GO:0015935">
    <property type="term" value="C:small ribosomal subunit"/>
    <property type="evidence" value="ECO:0007669"/>
    <property type="project" value="TreeGrafter"/>
</dbReference>
<dbReference type="GO" id="GO:0003735">
    <property type="term" value="F:structural constituent of ribosome"/>
    <property type="evidence" value="ECO:0007669"/>
    <property type="project" value="InterPro"/>
</dbReference>
<dbReference type="GO" id="GO:0006412">
    <property type="term" value="P:translation"/>
    <property type="evidence" value="ECO:0007669"/>
    <property type="project" value="UniProtKB-UniRule"/>
</dbReference>
<dbReference type="Gene3D" id="3.30.1320.10">
    <property type="match status" value="1"/>
</dbReference>
<dbReference type="HAMAP" id="MF_00385">
    <property type="entry name" value="Ribosomal_bS16"/>
    <property type="match status" value="1"/>
</dbReference>
<dbReference type="InterPro" id="IPR000307">
    <property type="entry name" value="Ribosomal_bS16"/>
</dbReference>
<dbReference type="InterPro" id="IPR020592">
    <property type="entry name" value="Ribosomal_bS16_CS"/>
</dbReference>
<dbReference type="InterPro" id="IPR023803">
    <property type="entry name" value="Ribosomal_bS16_dom_sf"/>
</dbReference>
<dbReference type="NCBIfam" id="NF011093">
    <property type="entry name" value="PRK14520.1"/>
    <property type="match status" value="1"/>
</dbReference>
<dbReference type="NCBIfam" id="TIGR00002">
    <property type="entry name" value="S16"/>
    <property type="match status" value="1"/>
</dbReference>
<dbReference type="PANTHER" id="PTHR12919">
    <property type="entry name" value="30S RIBOSOMAL PROTEIN S16"/>
    <property type="match status" value="1"/>
</dbReference>
<dbReference type="PANTHER" id="PTHR12919:SF20">
    <property type="entry name" value="SMALL RIBOSOMAL SUBUNIT PROTEIN BS16M"/>
    <property type="match status" value="1"/>
</dbReference>
<dbReference type="Pfam" id="PF00886">
    <property type="entry name" value="Ribosomal_S16"/>
    <property type="match status" value="1"/>
</dbReference>
<dbReference type="SUPFAM" id="SSF54565">
    <property type="entry name" value="Ribosomal protein S16"/>
    <property type="match status" value="1"/>
</dbReference>
<dbReference type="PROSITE" id="PS00732">
    <property type="entry name" value="RIBOSOMAL_S16"/>
    <property type="match status" value="1"/>
</dbReference>
<accession>A3PXV6</accession>